<reference key="1">
    <citation type="journal article" date="2015" name="Microbiology">
        <title>Genome of Methanoregula boonei 6A8 reveals adaptations to oligotrophic peatland environments.</title>
        <authorList>
            <person name="Braeuer S."/>
            <person name="Cadillo-Quiroz H."/>
            <person name="Kyrpides N."/>
            <person name="Woyke T."/>
            <person name="Goodwin L."/>
            <person name="Detter C."/>
            <person name="Podell S."/>
            <person name="Yavitt J.B."/>
            <person name="Zinder S.H."/>
        </authorList>
    </citation>
    <scope>NUCLEOTIDE SEQUENCE [LARGE SCALE GENOMIC DNA]</scope>
    <source>
        <strain>DSM 21154 / JCM 14090 / 6A8</strain>
    </source>
</reference>
<comment type="function">
    <text evidence="1">The RuvA-RuvB-RuvC complex processes Holliday junction (HJ) DNA during genetic recombination and DNA repair, while the RuvA-RuvB complex plays an important role in the rescue of blocked DNA replication forks via replication fork reversal (RFR). RuvA specifically binds to HJ cruciform DNA, conferring on it an open structure. The RuvB hexamer acts as an ATP-dependent pump, pulling dsDNA into and through the RuvAB complex. RuvB forms 2 homohexamers on either side of HJ DNA bound by 1 or 2 RuvA tetramers; 4 subunits per hexamer contact DNA at a time. Coordinated motions by a converter formed by DNA-disengaged RuvB subunits stimulates ATP hydrolysis and nucleotide exchange. Immobilization of the converter enables RuvB to convert the ATP-contained energy into a lever motion, pulling 2 nucleotides of DNA out of the RuvA tetramer per ATP hydrolyzed, thus driving DNA branch migration. The RuvB motors rotate together with the DNA substrate, which together with the progressing nucleotide cycle form the mechanistic basis for DNA recombination by continuous HJ branch migration. Branch migration allows RuvC to scan DNA until it finds its consensus sequence, where it cleaves and resolves cruciform DNA.</text>
</comment>
<comment type="catalytic activity">
    <reaction evidence="1">
        <text>ATP + H2O = ADP + phosphate + H(+)</text>
        <dbReference type="Rhea" id="RHEA:13065"/>
        <dbReference type="ChEBI" id="CHEBI:15377"/>
        <dbReference type="ChEBI" id="CHEBI:15378"/>
        <dbReference type="ChEBI" id="CHEBI:30616"/>
        <dbReference type="ChEBI" id="CHEBI:43474"/>
        <dbReference type="ChEBI" id="CHEBI:456216"/>
    </reaction>
</comment>
<comment type="subunit">
    <text evidence="1">Homohexamer. Forms an RuvA(8)-RuvB(12)-Holliday junction (HJ) complex. HJ DNA is sandwiched between 2 RuvA tetramers; dsDNA enters through RuvA and exits via RuvB. An RuvB hexamer assembles on each DNA strand where it exits the tetramer. Each RuvB hexamer is contacted by two RuvA subunits (via domain III) on 2 adjacent RuvB subunits; this complex drives branch migration. In the full resolvosome a probable DNA-RuvA(4)-RuvB(12)-RuvC(2) complex forms which resolves the HJ.</text>
</comment>
<comment type="subcellular location">
    <subcellularLocation>
        <location evidence="1">Cytoplasm</location>
    </subcellularLocation>
</comment>
<comment type="domain">
    <text evidence="1">Has 3 domains, the large (RuvB-L) and small ATPase (RuvB-S) domains and the C-terminal head (RuvB-H) domain. The head domain binds DNA, while the ATPase domains jointly bind ATP, ADP or are empty depending on the state of the subunit in the translocation cycle. During a single DNA translocation step the structure of each domain remains the same, but their relative positions change.</text>
</comment>
<comment type="similarity">
    <text evidence="1">Belongs to the RuvB family.</text>
</comment>
<proteinExistence type="inferred from homology"/>
<feature type="chain" id="PRO_1000001427" description="Holliday junction branch migration complex subunit RuvB">
    <location>
        <begin position="1"/>
        <end position="335"/>
    </location>
</feature>
<feature type="region of interest" description="Large ATPase domain (RuvB-L)" evidence="1">
    <location>
        <begin position="1"/>
        <end position="181"/>
    </location>
</feature>
<feature type="region of interest" description="Small ATPAse domain (RuvB-S)" evidence="1">
    <location>
        <begin position="182"/>
        <end position="252"/>
    </location>
</feature>
<feature type="region of interest" description="Head domain (RuvB-H)" evidence="1">
    <location>
        <begin position="255"/>
        <end position="335"/>
    </location>
</feature>
<feature type="binding site" evidence="1">
    <location>
        <position position="20"/>
    </location>
    <ligand>
        <name>ATP</name>
        <dbReference type="ChEBI" id="CHEBI:30616"/>
    </ligand>
</feature>
<feature type="binding site" evidence="1">
    <location>
        <position position="21"/>
    </location>
    <ligand>
        <name>ATP</name>
        <dbReference type="ChEBI" id="CHEBI:30616"/>
    </ligand>
</feature>
<feature type="binding site" evidence="1">
    <location>
        <position position="62"/>
    </location>
    <ligand>
        <name>ATP</name>
        <dbReference type="ChEBI" id="CHEBI:30616"/>
    </ligand>
</feature>
<feature type="binding site" evidence="1">
    <location>
        <position position="65"/>
    </location>
    <ligand>
        <name>ATP</name>
        <dbReference type="ChEBI" id="CHEBI:30616"/>
    </ligand>
</feature>
<feature type="binding site" evidence="1">
    <location>
        <position position="66"/>
    </location>
    <ligand>
        <name>ATP</name>
        <dbReference type="ChEBI" id="CHEBI:30616"/>
    </ligand>
</feature>
<feature type="binding site" evidence="1">
    <location>
        <position position="66"/>
    </location>
    <ligand>
        <name>Mg(2+)</name>
        <dbReference type="ChEBI" id="CHEBI:18420"/>
    </ligand>
</feature>
<feature type="binding site" evidence="1">
    <location>
        <position position="67"/>
    </location>
    <ligand>
        <name>ATP</name>
        <dbReference type="ChEBI" id="CHEBI:30616"/>
    </ligand>
</feature>
<feature type="binding site" evidence="1">
    <location>
        <begin position="128"/>
        <end position="130"/>
    </location>
    <ligand>
        <name>ATP</name>
        <dbReference type="ChEBI" id="CHEBI:30616"/>
    </ligand>
</feature>
<feature type="binding site" evidence="1">
    <location>
        <position position="171"/>
    </location>
    <ligand>
        <name>ATP</name>
        <dbReference type="ChEBI" id="CHEBI:30616"/>
    </ligand>
</feature>
<feature type="binding site" evidence="1">
    <location>
        <position position="181"/>
    </location>
    <ligand>
        <name>ATP</name>
        <dbReference type="ChEBI" id="CHEBI:30616"/>
    </ligand>
</feature>
<feature type="binding site" evidence="1">
    <location>
        <position position="218"/>
    </location>
    <ligand>
        <name>ATP</name>
        <dbReference type="ChEBI" id="CHEBI:30616"/>
    </ligand>
</feature>
<feature type="binding site" evidence="1">
    <location>
        <position position="310"/>
    </location>
    <ligand>
        <name>DNA</name>
        <dbReference type="ChEBI" id="CHEBI:16991"/>
    </ligand>
</feature>
<feature type="binding site" evidence="1">
    <location>
        <position position="315"/>
    </location>
    <ligand>
        <name>DNA</name>
        <dbReference type="ChEBI" id="CHEBI:16991"/>
    </ligand>
</feature>
<name>RUVB_METB6</name>
<sequence length="335" mass="36309">MSERVISPEPVPDDADEITLRPSTLEAFVGQEPAKNALRIAIAAARKRGEPIDHILFAGPPGLGKTTLAHIIAREMGAAIRTTTGPVLEKTGDMAAIATALQNGDVLFIDEIHRMNPVVEEILYPAMEDFFIDVMIGEGPSARSIKLTLERFTLIGATTRQGLLSSPFRDRFGLLIRLNLYSPEDLEKIVTRSAEILRIPITPKGAAVIASRSRGTPRIANRLLRRVRDYAVVEGDGTITAEIAGAGLALLQIDELGLDDIDRRILSVIAGDFGGGPVGAKTIAISVGEEVRTIEEVYEPYLIQIGFVKRTPQGRETTPAALAHLKLNHSQKTLF</sequence>
<organism>
    <name type="scientific">Methanoregula boonei (strain DSM 21154 / JCM 14090 / 6A8)</name>
    <dbReference type="NCBI Taxonomy" id="456442"/>
    <lineage>
        <taxon>Archaea</taxon>
        <taxon>Methanobacteriati</taxon>
        <taxon>Methanobacteriota</taxon>
        <taxon>Stenosarchaea group</taxon>
        <taxon>Methanomicrobia</taxon>
        <taxon>Methanomicrobiales</taxon>
        <taxon>Methanoregulaceae</taxon>
        <taxon>Methanoregula</taxon>
    </lineage>
</organism>
<dbReference type="EC" id="3.6.4.-" evidence="1"/>
<dbReference type="EMBL" id="CP000780">
    <property type="protein sequence ID" value="ABS54637.1"/>
    <property type="molecule type" value="Genomic_DNA"/>
</dbReference>
<dbReference type="RefSeq" id="WP_011991125.1">
    <property type="nucleotide sequence ID" value="NC_009712.1"/>
</dbReference>
<dbReference type="SMR" id="A7I4H6"/>
<dbReference type="STRING" id="456442.Mboo_0113"/>
<dbReference type="GeneID" id="5411287"/>
<dbReference type="KEGG" id="mbn:Mboo_0113"/>
<dbReference type="eggNOG" id="arCOG00473">
    <property type="taxonomic scope" value="Archaea"/>
</dbReference>
<dbReference type="HOGENOM" id="CLU_055599_1_0_2"/>
<dbReference type="OrthoDB" id="8658at2157"/>
<dbReference type="Proteomes" id="UP000002408">
    <property type="component" value="Chromosome"/>
</dbReference>
<dbReference type="GO" id="GO:0005737">
    <property type="term" value="C:cytoplasm"/>
    <property type="evidence" value="ECO:0007669"/>
    <property type="project" value="UniProtKB-SubCell"/>
</dbReference>
<dbReference type="GO" id="GO:0048476">
    <property type="term" value="C:Holliday junction resolvase complex"/>
    <property type="evidence" value="ECO:0007669"/>
    <property type="project" value="UniProtKB-UniRule"/>
</dbReference>
<dbReference type="GO" id="GO:0005524">
    <property type="term" value="F:ATP binding"/>
    <property type="evidence" value="ECO:0007669"/>
    <property type="project" value="UniProtKB-UniRule"/>
</dbReference>
<dbReference type="GO" id="GO:0016887">
    <property type="term" value="F:ATP hydrolysis activity"/>
    <property type="evidence" value="ECO:0007669"/>
    <property type="project" value="InterPro"/>
</dbReference>
<dbReference type="GO" id="GO:0000400">
    <property type="term" value="F:four-way junction DNA binding"/>
    <property type="evidence" value="ECO:0007669"/>
    <property type="project" value="UniProtKB-UniRule"/>
</dbReference>
<dbReference type="GO" id="GO:0009378">
    <property type="term" value="F:four-way junction helicase activity"/>
    <property type="evidence" value="ECO:0007669"/>
    <property type="project" value="InterPro"/>
</dbReference>
<dbReference type="GO" id="GO:0006310">
    <property type="term" value="P:DNA recombination"/>
    <property type="evidence" value="ECO:0007669"/>
    <property type="project" value="UniProtKB-UniRule"/>
</dbReference>
<dbReference type="GO" id="GO:0006281">
    <property type="term" value="P:DNA repair"/>
    <property type="evidence" value="ECO:0007669"/>
    <property type="project" value="UniProtKB-UniRule"/>
</dbReference>
<dbReference type="CDD" id="cd00009">
    <property type="entry name" value="AAA"/>
    <property type="match status" value="1"/>
</dbReference>
<dbReference type="Gene3D" id="1.10.8.60">
    <property type="match status" value="1"/>
</dbReference>
<dbReference type="Gene3D" id="3.40.50.300">
    <property type="entry name" value="P-loop containing nucleotide triphosphate hydrolases"/>
    <property type="match status" value="1"/>
</dbReference>
<dbReference type="Gene3D" id="1.10.10.10">
    <property type="entry name" value="Winged helix-like DNA-binding domain superfamily/Winged helix DNA-binding domain"/>
    <property type="match status" value="1"/>
</dbReference>
<dbReference type="HAMAP" id="MF_00016">
    <property type="entry name" value="DNA_HJ_migration_RuvB"/>
    <property type="match status" value="1"/>
</dbReference>
<dbReference type="InterPro" id="IPR003593">
    <property type="entry name" value="AAA+_ATPase"/>
</dbReference>
<dbReference type="InterPro" id="IPR041445">
    <property type="entry name" value="AAA_lid_4"/>
</dbReference>
<dbReference type="InterPro" id="IPR004605">
    <property type="entry name" value="DNA_helicase_Holl-junc_RuvB"/>
</dbReference>
<dbReference type="InterPro" id="IPR027417">
    <property type="entry name" value="P-loop_NTPase"/>
</dbReference>
<dbReference type="InterPro" id="IPR008824">
    <property type="entry name" value="RuvB-like_N"/>
</dbReference>
<dbReference type="InterPro" id="IPR008823">
    <property type="entry name" value="RuvB_C"/>
</dbReference>
<dbReference type="InterPro" id="IPR036388">
    <property type="entry name" value="WH-like_DNA-bd_sf"/>
</dbReference>
<dbReference type="InterPro" id="IPR036390">
    <property type="entry name" value="WH_DNA-bd_sf"/>
</dbReference>
<dbReference type="NCBIfam" id="NF000868">
    <property type="entry name" value="PRK00080.1"/>
    <property type="match status" value="1"/>
</dbReference>
<dbReference type="NCBIfam" id="TIGR00635">
    <property type="entry name" value="ruvB"/>
    <property type="match status" value="1"/>
</dbReference>
<dbReference type="PANTHER" id="PTHR42848">
    <property type="match status" value="1"/>
</dbReference>
<dbReference type="PANTHER" id="PTHR42848:SF1">
    <property type="entry name" value="HOLLIDAY JUNCTION BRANCH MIGRATION COMPLEX SUBUNIT RUVB"/>
    <property type="match status" value="1"/>
</dbReference>
<dbReference type="Pfam" id="PF17864">
    <property type="entry name" value="AAA_lid_4"/>
    <property type="match status" value="1"/>
</dbReference>
<dbReference type="Pfam" id="PF05491">
    <property type="entry name" value="RuvB_C"/>
    <property type="match status" value="1"/>
</dbReference>
<dbReference type="Pfam" id="PF05496">
    <property type="entry name" value="RuvB_N"/>
    <property type="match status" value="1"/>
</dbReference>
<dbReference type="SMART" id="SM00382">
    <property type="entry name" value="AAA"/>
    <property type="match status" value="1"/>
</dbReference>
<dbReference type="SUPFAM" id="SSF52540">
    <property type="entry name" value="P-loop containing nucleoside triphosphate hydrolases"/>
    <property type="match status" value="1"/>
</dbReference>
<dbReference type="SUPFAM" id="SSF46785">
    <property type="entry name" value="Winged helix' DNA-binding domain"/>
    <property type="match status" value="1"/>
</dbReference>
<evidence type="ECO:0000255" key="1">
    <source>
        <dbReference type="HAMAP-Rule" id="MF_00016"/>
    </source>
</evidence>
<protein>
    <recommendedName>
        <fullName evidence="1">Holliday junction branch migration complex subunit RuvB</fullName>
        <ecNumber evidence="1">3.6.4.-</ecNumber>
    </recommendedName>
</protein>
<gene>
    <name evidence="1" type="primary">ruvB</name>
    <name type="ordered locus">Mboo_0113</name>
</gene>
<accession>A7I4H6</accession>
<keyword id="KW-0067">ATP-binding</keyword>
<keyword id="KW-0963">Cytoplasm</keyword>
<keyword id="KW-0227">DNA damage</keyword>
<keyword id="KW-0233">DNA recombination</keyword>
<keyword id="KW-0234">DNA repair</keyword>
<keyword id="KW-0238">DNA-binding</keyword>
<keyword id="KW-0378">Hydrolase</keyword>
<keyword id="KW-0547">Nucleotide-binding</keyword>
<keyword id="KW-1185">Reference proteome</keyword>